<gene>
    <name type="primary">norM</name>
    <name type="ordered locus">BT9727_1267</name>
</gene>
<feature type="chain" id="PRO_0000164202" description="Probable multidrug resistance protein NorM">
    <location>
        <begin position="1"/>
        <end position="453"/>
    </location>
</feature>
<feature type="transmembrane region" description="Helical" evidence="2">
    <location>
        <begin position="13"/>
        <end position="34"/>
    </location>
</feature>
<feature type="transmembrane region" description="Helical" evidence="2">
    <location>
        <begin position="49"/>
        <end position="71"/>
    </location>
</feature>
<feature type="transmembrane region" description="Helical" evidence="2">
    <location>
        <begin position="92"/>
        <end position="114"/>
    </location>
</feature>
<feature type="transmembrane region" description="Helical" evidence="2">
    <location>
        <begin position="129"/>
        <end position="151"/>
    </location>
</feature>
<feature type="transmembrane region" description="Helical" evidence="2">
    <location>
        <begin position="164"/>
        <end position="183"/>
    </location>
</feature>
<feature type="transmembrane region" description="Helical" evidence="2">
    <location>
        <begin position="193"/>
        <end position="215"/>
    </location>
</feature>
<feature type="transmembrane region" description="Helical" evidence="2">
    <location>
        <begin position="244"/>
        <end position="266"/>
    </location>
</feature>
<feature type="transmembrane region" description="Helical" evidence="2">
    <location>
        <begin position="286"/>
        <end position="308"/>
    </location>
</feature>
<feature type="transmembrane region" description="Helical" evidence="2">
    <location>
        <begin position="317"/>
        <end position="339"/>
    </location>
</feature>
<feature type="transmembrane region" description="Helical" evidence="2">
    <location>
        <begin position="359"/>
        <end position="381"/>
    </location>
</feature>
<feature type="transmembrane region" description="Helical" evidence="2">
    <location>
        <begin position="388"/>
        <end position="410"/>
    </location>
</feature>
<feature type="transmembrane region" description="Helical" evidence="2">
    <location>
        <begin position="420"/>
        <end position="442"/>
    </location>
</feature>
<accession>Q6HLG9</accession>
<comment type="function">
    <text evidence="1">Multidrug efflux pump.</text>
</comment>
<comment type="subcellular location">
    <subcellularLocation>
        <location evidence="1">Cell membrane</location>
        <topology evidence="1">Multi-pass membrane protein</topology>
    </subcellularLocation>
</comment>
<comment type="similarity">
    <text evidence="3">Belongs to the multi antimicrobial extrusion (MATE) (TC 2.A.66.1) family.</text>
</comment>
<sequence>MKETNSFSQKLKQFALLFFPIFVTQMSLFAMSFFDTTMSGHASPIDLAGVAIGTSIWIPVSTGLTGILMATTPIVAQLVGSKKKEDVPHVVIQAVYLAICASFVVILIGLFTVTPILNGMRLEEPVERIAAQFLSIIAIGIIPLFTYTVLRGFIDALGKTRTTMIITLLSLPINVVLNYVLIFGNFGFPKLGGVGAAIASAATYWCILIITVMIIRTKEPFASFNIFKQLYRPSLSSWKEFLKLGVPIGFAIFFETSIFAAVTLMMSNFSTTTIAAHQAAMNFASLLYMTPLSLAMAMTIAVGFEVGAKRYNNAKQYGFIGIGLALAFALLYSILLYFFDDEIASIYTTDIQVHHLAKEFLIFAILFQISDAIATPVQGALRGYKDVNVALIMTLIAYWVIGLPLGYILATYTDWAAKGYWIGLIIGLAFGATFLLIRLFQVQRKYTTQNSRS</sequence>
<organism>
    <name type="scientific">Bacillus thuringiensis subsp. konkukian (strain 97-27)</name>
    <dbReference type="NCBI Taxonomy" id="281309"/>
    <lineage>
        <taxon>Bacteria</taxon>
        <taxon>Bacillati</taxon>
        <taxon>Bacillota</taxon>
        <taxon>Bacilli</taxon>
        <taxon>Bacillales</taxon>
        <taxon>Bacillaceae</taxon>
        <taxon>Bacillus</taxon>
        <taxon>Bacillus cereus group</taxon>
    </lineage>
</organism>
<reference key="1">
    <citation type="journal article" date="2006" name="J. Bacteriol.">
        <title>Pathogenomic sequence analysis of Bacillus cereus and Bacillus thuringiensis isolates closely related to Bacillus anthracis.</title>
        <authorList>
            <person name="Han C.S."/>
            <person name="Xie G."/>
            <person name="Challacombe J.F."/>
            <person name="Altherr M.R."/>
            <person name="Bhotika S.S."/>
            <person name="Bruce D."/>
            <person name="Campbell C.S."/>
            <person name="Campbell M.L."/>
            <person name="Chen J."/>
            <person name="Chertkov O."/>
            <person name="Cleland C."/>
            <person name="Dimitrijevic M."/>
            <person name="Doggett N.A."/>
            <person name="Fawcett J.J."/>
            <person name="Glavina T."/>
            <person name="Goodwin L.A."/>
            <person name="Hill K.K."/>
            <person name="Hitchcock P."/>
            <person name="Jackson P.J."/>
            <person name="Keim P."/>
            <person name="Kewalramani A.R."/>
            <person name="Longmire J."/>
            <person name="Lucas S."/>
            <person name="Malfatti S."/>
            <person name="McMurry K."/>
            <person name="Meincke L.J."/>
            <person name="Misra M."/>
            <person name="Moseman B.L."/>
            <person name="Mundt M."/>
            <person name="Munk A.C."/>
            <person name="Okinaka R.T."/>
            <person name="Parson-Quintana B."/>
            <person name="Reilly L.P."/>
            <person name="Richardson P."/>
            <person name="Robinson D.L."/>
            <person name="Rubin E."/>
            <person name="Saunders E."/>
            <person name="Tapia R."/>
            <person name="Tesmer J.G."/>
            <person name="Thayer N."/>
            <person name="Thompson L.S."/>
            <person name="Tice H."/>
            <person name="Ticknor L.O."/>
            <person name="Wills P.L."/>
            <person name="Brettin T.S."/>
            <person name="Gilna P."/>
        </authorList>
    </citation>
    <scope>NUCLEOTIDE SEQUENCE [LARGE SCALE GENOMIC DNA]</scope>
    <source>
        <strain>97-27</strain>
    </source>
</reference>
<evidence type="ECO:0000250" key="1"/>
<evidence type="ECO:0000255" key="2"/>
<evidence type="ECO:0000305" key="3"/>
<dbReference type="EMBL" id="AE017355">
    <property type="protein sequence ID" value="AAT61948.1"/>
    <property type="molecule type" value="Genomic_DNA"/>
</dbReference>
<dbReference type="RefSeq" id="WP_000665388.1">
    <property type="nucleotide sequence ID" value="NC_005957.1"/>
</dbReference>
<dbReference type="RefSeq" id="YP_035602.1">
    <property type="nucleotide sequence ID" value="NC_005957.1"/>
</dbReference>
<dbReference type="SMR" id="Q6HLG9"/>
<dbReference type="KEGG" id="btk:BT9727_1267"/>
<dbReference type="PATRIC" id="fig|281309.8.peg.1335"/>
<dbReference type="HOGENOM" id="CLU_012893_6_0_9"/>
<dbReference type="Proteomes" id="UP000001301">
    <property type="component" value="Chromosome"/>
</dbReference>
<dbReference type="GO" id="GO:0005886">
    <property type="term" value="C:plasma membrane"/>
    <property type="evidence" value="ECO:0007669"/>
    <property type="project" value="UniProtKB-SubCell"/>
</dbReference>
<dbReference type="GO" id="GO:0015297">
    <property type="term" value="F:antiporter activity"/>
    <property type="evidence" value="ECO:0007669"/>
    <property type="project" value="UniProtKB-KW"/>
</dbReference>
<dbReference type="GO" id="GO:0042910">
    <property type="term" value="F:xenobiotic transmembrane transporter activity"/>
    <property type="evidence" value="ECO:0007669"/>
    <property type="project" value="InterPro"/>
</dbReference>
<dbReference type="GO" id="GO:0006811">
    <property type="term" value="P:monoatomic ion transport"/>
    <property type="evidence" value="ECO:0007669"/>
    <property type="project" value="UniProtKB-KW"/>
</dbReference>
<dbReference type="CDD" id="cd13131">
    <property type="entry name" value="MATE_NorM_like"/>
    <property type="match status" value="1"/>
</dbReference>
<dbReference type="InterPro" id="IPR002528">
    <property type="entry name" value="MATE_fam"/>
</dbReference>
<dbReference type="InterPro" id="IPR050222">
    <property type="entry name" value="MATE_MdtK"/>
</dbReference>
<dbReference type="InterPro" id="IPR048279">
    <property type="entry name" value="MdtK-like"/>
</dbReference>
<dbReference type="NCBIfam" id="TIGR00797">
    <property type="entry name" value="matE"/>
    <property type="match status" value="1"/>
</dbReference>
<dbReference type="PANTHER" id="PTHR43298:SF2">
    <property type="entry name" value="FMN_FAD EXPORTER YEEO-RELATED"/>
    <property type="match status" value="1"/>
</dbReference>
<dbReference type="PANTHER" id="PTHR43298">
    <property type="entry name" value="MULTIDRUG RESISTANCE PROTEIN NORM-RELATED"/>
    <property type="match status" value="1"/>
</dbReference>
<dbReference type="Pfam" id="PF01554">
    <property type="entry name" value="MatE"/>
    <property type="match status" value="2"/>
</dbReference>
<dbReference type="PIRSF" id="PIRSF006603">
    <property type="entry name" value="DinF"/>
    <property type="match status" value="1"/>
</dbReference>
<name>NORM_BACHK</name>
<protein>
    <recommendedName>
        <fullName>Probable multidrug resistance protein NorM</fullName>
    </recommendedName>
    <alternativeName>
        <fullName>Multidrug-efflux transporter</fullName>
    </alternativeName>
</protein>
<proteinExistence type="inferred from homology"/>
<keyword id="KW-0050">Antiport</keyword>
<keyword id="KW-1003">Cell membrane</keyword>
<keyword id="KW-0406">Ion transport</keyword>
<keyword id="KW-0472">Membrane</keyword>
<keyword id="KW-0812">Transmembrane</keyword>
<keyword id="KW-1133">Transmembrane helix</keyword>
<keyword id="KW-0813">Transport</keyword>